<dbReference type="EMBL" id="CP000230">
    <property type="protein sequence ID" value="ABC23474.1"/>
    <property type="molecule type" value="Genomic_DNA"/>
</dbReference>
<dbReference type="RefSeq" id="WP_011390427.1">
    <property type="nucleotide sequence ID" value="NC_007643.1"/>
</dbReference>
<dbReference type="RefSeq" id="YP_427761.1">
    <property type="nucleotide sequence ID" value="NC_007643.1"/>
</dbReference>
<dbReference type="SMR" id="Q2RQX1"/>
<dbReference type="STRING" id="269796.Rru_A2677"/>
<dbReference type="EnsemblBacteria" id="ABC23474">
    <property type="protein sequence ID" value="ABC23474"/>
    <property type="gene ID" value="Rru_A2677"/>
</dbReference>
<dbReference type="KEGG" id="rru:Rru_A2677"/>
<dbReference type="PATRIC" id="fig|269796.9.peg.2784"/>
<dbReference type="eggNOG" id="COG0198">
    <property type="taxonomic scope" value="Bacteria"/>
</dbReference>
<dbReference type="HOGENOM" id="CLU_093315_2_0_5"/>
<dbReference type="PhylomeDB" id="Q2RQX1"/>
<dbReference type="Proteomes" id="UP000001929">
    <property type="component" value="Chromosome"/>
</dbReference>
<dbReference type="GO" id="GO:1990904">
    <property type="term" value="C:ribonucleoprotein complex"/>
    <property type="evidence" value="ECO:0007669"/>
    <property type="project" value="UniProtKB-KW"/>
</dbReference>
<dbReference type="GO" id="GO:0005840">
    <property type="term" value="C:ribosome"/>
    <property type="evidence" value="ECO:0007669"/>
    <property type="project" value="UniProtKB-KW"/>
</dbReference>
<dbReference type="GO" id="GO:0019843">
    <property type="term" value="F:rRNA binding"/>
    <property type="evidence" value="ECO:0007669"/>
    <property type="project" value="UniProtKB-UniRule"/>
</dbReference>
<dbReference type="GO" id="GO:0003735">
    <property type="term" value="F:structural constituent of ribosome"/>
    <property type="evidence" value="ECO:0007669"/>
    <property type="project" value="InterPro"/>
</dbReference>
<dbReference type="GO" id="GO:0006412">
    <property type="term" value="P:translation"/>
    <property type="evidence" value="ECO:0007669"/>
    <property type="project" value="UniProtKB-UniRule"/>
</dbReference>
<dbReference type="CDD" id="cd06089">
    <property type="entry name" value="KOW_RPL26"/>
    <property type="match status" value="1"/>
</dbReference>
<dbReference type="FunFam" id="2.30.30.30:FF:000004">
    <property type="entry name" value="50S ribosomal protein L24"/>
    <property type="match status" value="1"/>
</dbReference>
<dbReference type="Gene3D" id="2.30.30.30">
    <property type="match status" value="1"/>
</dbReference>
<dbReference type="HAMAP" id="MF_01326_B">
    <property type="entry name" value="Ribosomal_uL24_B"/>
    <property type="match status" value="1"/>
</dbReference>
<dbReference type="InterPro" id="IPR005824">
    <property type="entry name" value="KOW"/>
</dbReference>
<dbReference type="InterPro" id="IPR014722">
    <property type="entry name" value="Rib_uL2_dom2"/>
</dbReference>
<dbReference type="InterPro" id="IPR003256">
    <property type="entry name" value="Ribosomal_uL24"/>
</dbReference>
<dbReference type="InterPro" id="IPR005825">
    <property type="entry name" value="Ribosomal_uL24_CS"/>
</dbReference>
<dbReference type="InterPro" id="IPR041988">
    <property type="entry name" value="Ribosomal_uL24_KOW"/>
</dbReference>
<dbReference type="InterPro" id="IPR008991">
    <property type="entry name" value="Translation_prot_SH3-like_sf"/>
</dbReference>
<dbReference type="NCBIfam" id="TIGR01079">
    <property type="entry name" value="rplX_bact"/>
    <property type="match status" value="1"/>
</dbReference>
<dbReference type="PANTHER" id="PTHR12903">
    <property type="entry name" value="MITOCHONDRIAL RIBOSOMAL PROTEIN L24"/>
    <property type="match status" value="1"/>
</dbReference>
<dbReference type="Pfam" id="PF00467">
    <property type="entry name" value="KOW"/>
    <property type="match status" value="1"/>
</dbReference>
<dbReference type="Pfam" id="PF17136">
    <property type="entry name" value="ribosomal_L24"/>
    <property type="match status" value="1"/>
</dbReference>
<dbReference type="SMART" id="SM00739">
    <property type="entry name" value="KOW"/>
    <property type="match status" value="1"/>
</dbReference>
<dbReference type="SUPFAM" id="SSF50104">
    <property type="entry name" value="Translation proteins SH3-like domain"/>
    <property type="match status" value="1"/>
</dbReference>
<dbReference type="PROSITE" id="PS01108">
    <property type="entry name" value="RIBOSOMAL_L24"/>
    <property type="match status" value="1"/>
</dbReference>
<name>RL24_RHORT</name>
<gene>
    <name evidence="1" type="primary">rplX</name>
    <name type="ordered locus">Rru_A2677</name>
</gene>
<accession>Q2RQX1</accession>
<evidence type="ECO:0000255" key="1">
    <source>
        <dbReference type="HAMAP-Rule" id="MF_01326"/>
    </source>
</evidence>
<evidence type="ECO:0000305" key="2"/>
<protein>
    <recommendedName>
        <fullName evidence="1">Large ribosomal subunit protein uL24</fullName>
    </recommendedName>
    <alternativeName>
        <fullName evidence="2">50S ribosomal protein L24</fullName>
    </alternativeName>
</protein>
<comment type="function">
    <text evidence="1">One of two assembly initiator proteins, it binds directly to the 5'-end of the 23S rRNA, where it nucleates assembly of the 50S subunit.</text>
</comment>
<comment type="function">
    <text evidence="1">One of the proteins that surrounds the polypeptide exit tunnel on the outside of the subunit.</text>
</comment>
<comment type="subunit">
    <text evidence="1">Part of the 50S ribosomal subunit.</text>
</comment>
<comment type="similarity">
    <text evidence="1">Belongs to the universal ribosomal protein uL24 family.</text>
</comment>
<feature type="chain" id="PRO_0000241653" description="Large ribosomal subunit protein uL24">
    <location>
        <begin position="1"/>
        <end position="106"/>
    </location>
</feature>
<reference key="1">
    <citation type="journal article" date="2011" name="Stand. Genomic Sci.">
        <title>Complete genome sequence of Rhodospirillum rubrum type strain (S1).</title>
        <authorList>
            <person name="Munk A.C."/>
            <person name="Copeland A."/>
            <person name="Lucas S."/>
            <person name="Lapidus A."/>
            <person name="Del Rio T.G."/>
            <person name="Barry K."/>
            <person name="Detter J.C."/>
            <person name="Hammon N."/>
            <person name="Israni S."/>
            <person name="Pitluck S."/>
            <person name="Brettin T."/>
            <person name="Bruce D."/>
            <person name="Han C."/>
            <person name="Tapia R."/>
            <person name="Gilna P."/>
            <person name="Schmutz J."/>
            <person name="Larimer F."/>
            <person name="Land M."/>
            <person name="Kyrpides N.C."/>
            <person name="Mavromatis K."/>
            <person name="Richardson P."/>
            <person name="Rohde M."/>
            <person name="Goeker M."/>
            <person name="Klenk H.P."/>
            <person name="Zhang Y."/>
            <person name="Roberts G.P."/>
            <person name="Reslewic S."/>
            <person name="Schwartz D.C."/>
        </authorList>
    </citation>
    <scope>NUCLEOTIDE SEQUENCE [LARGE SCALE GENOMIC DNA]</scope>
    <source>
        <strain>ATCC 11170 / ATH 1.1.1 / DSM 467 / LMG 4362 / NCIMB 8255 / S1</strain>
    </source>
</reference>
<organism>
    <name type="scientific">Rhodospirillum rubrum (strain ATCC 11170 / ATH 1.1.1 / DSM 467 / LMG 4362 / NCIMB 8255 / S1)</name>
    <dbReference type="NCBI Taxonomy" id="269796"/>
    <lineage>
        <taxon>Bacteria</taxon>
        <taxon>Pseudomonadati</taxon>
        <taxon>Pseudomonadota</taxon>
        <taxon>Alphaproteobacteria</taxon>
        <taxon>Rhodospirillales</taxon>
        <taxon>Rhodospirillaceae</taxon>
        <taxon>Rhodospirillum</taxon>
    </lineage>
</organism>
<proteinExistence type="inferred from homology"/>
<keyword id="KW-1185">Reference proteome</keyword>
<keyword id="KW-0687">Ribonucleoprotein</keyword>
<keyword id="KW-0689">Ribosomal protein</keyword>
<keyword id="KW-0694">RNA-binding</keyword>
<keyword id="KW-0699">rRNA-binding</keyword>
<sequence>MSAAKIKKGDKVVVLAGKDKGKRGEVLKAIPKEGRVVVQGVNVVKRHTRPTNTAAGGIVEKEASIHVSNVAHEDPKDGSPTRVGFKVLEDGRKVRYAKRSGDVIDG</sequence>